<sequence length="397" mass="44599">MASEGITEIDSGLIETNYDNVVYKFDDLNLKPNIVRGIFGYGYETPSAIQQRAILPITEGRDVLAQAQSGTGKTATFTISALQRINENEKATQALILAPTRELALQIKNVITAIGLYLKVTVHASIGGTSMSDDIEAFRSGVQIVVGTPGRVLDMIERRYFKTDKVKMFILDEADEMLSSGFKEQIYNIFRLLPETTQIVLLSATMPQDVLEVTTKFMNNPVRILVKKDELTLEGIKQFYINVELEDYKFDCLCDLYDSISVTQAVIFCNTRSKVEFLTNKLREQHFTVSAIHADLPQAERDTIMKEFRSGSSRILISTDLLARGIDVQQVSLVINYDLPANKENYIHRIGRGGRFGRKGVAINFVTDRDVGMMREIEKFYSTQIEEMPADIGALFA</sequence>
<organism>
    <name type="scientific">Candida albicans (strain SC5314 / ATCC MYA-2876)</name>
    <name type="common">Yeast</name>
    <dbReference type="NCBI Taxonomy" id="237561"/>
    <lineage>
        <taxon>Eukaryota</taxon>
        <taxon>Fungi</taxon>
        <taxon>Dikarya</taxon>
        <taxon>Ascomycota</taxon>
        <taxon>Saccharomycotina</taxon>
        <taxon>Pichiomycetes</taxon>
        <taxon>Debaryomycetaceae</taxon>
        <taxon>Candida/Lodderomyces clade</taxon>
        <taxon>Candida</taxon>
    </lineage>
</organism>
<comment type="function">
    <text evidence="1">ATP-dependent RNA helicase which is a subunit of the eIF4F complex involved in cap recognition and is required for mRNA binding to ribosome. In the current model of translation initiation, eIF4A unwinds RNA secondary structures in the 5'-UTR of mRNAs which is necessary to allow efficient binding of the small ribosomal subunit, and subsequent scanning for the initiator codon (By similarity).</text>
</comment>
<comment type="catalytic activity">
    <reaction>
        <text>ATP + H2O = ADP + phosphate + H(+)</text>
        <dbReference type="Rhea" id="RHEA:13065"/>
        <dbReference type="ChEBI" id="CHEBI:15377"/>
        <dbReference type="ChEBI" id="CHEBI:15378"/>
        <dbReference type="ChEBI" id="CHEBI:30616"/>
        <dbReference type="ChEBI" id="CHEBI:43474"/>
        <dbReference type="ChEBI" id="CHEBI:456216"/>
        <dbReference type="EC" id="3.6.4.13"/>
    </reaction>
</comment>
<comment type="subunit">
    <text evidence="1">Component of the eIF4F complex, which composition varies with external and internal environmental conditions. It is composed of at least eIF4A, eIF4E and eIF4G (By similarity).</text>
</comment>
<comment type="subcellular location">
    <subcellularLocation>
        <location evidence="1">Cytoplasm</location>
    </subcellularLocation>
</comment>
<comment type="domain">
    <text>The Q motif is unique to and characteristic of the DEAD box family of RNA helicases and controls ATP binding and hydrolysis.</text>
</comment>
<comment type="similarity">
    <text evidence="4">Belongs to the DEAD box helicase family. eIF4A subfamily.</text>
</comment>
<reference key="1">
    <citation type="journal article" date="1996" name="J. Med. Vet. Mycol.">
        <title>Molecular cloning of a gene encoding translation initiation factor (TIF) from Candida albicans.</title>
        <authorList>
            <person name="Mirbod F."/>
            <person name="Nakashima S."/>
            <person name="Kitajima Y."/>
            <person name="Ghannoum M.A."/>
            <person name="Cannon R.D."/>
            <person name="Nozawa Y."/>
        </authorList>
    </citation>
    <scope>NUCLEOTIDE SEQUENCE [GENOMIC DNA]</scope>
</reference>
<reference key="2">
    <citation type="journal article" date="2004" name="Proc. Natl. Acad. Sci. U.S.A.">
        <title>The diploid genome sequence of Candida albicans.</title>
        <authorList>
            <person name="Jones T."/>
            <person name="Federspiel N.A."/>
            <person name="Chibana H."/>
            <person name="Dungan J."/>
            <person name="Kalman S."/>
            <person name="Magee B.B."/>
            <person name="Newport G."/>
            <person name="Thorstenson Y.R."/>
            <person name="Agabian N."/>
            <person name="Magee P.T."/>
            <person name="Davis R.W."/>
            <person name="Scherer S."/>
        </authorList>
    </citation>
    <scope>NUCLEOTIDE SEQUENCE [LARGE SCALE GENOMIC DNA]</scope>
    <source>
        <strain>SC5314 / ATCC MYA-2876</strain>
    </source>
</reference>
<reference key="3">
    <citation type="journal article" date="2007" name="Genome Biol.">
        <title>Assembly of the Candida albicans genome into sixteen supercontigs aligned on the eight chromosomes.</title>
        <authorList>
            <person name="van het Hoog M."/>
            <person name="Rast T.J."/>
            <person name="Martchenko M."/>
            <person name="Grindle S."/>
            <person name="Dignard D."/>
            <person name="Hogues H."/>
            <person name="Cuomo C."/>
            <person name="Berriman M."/>
            <person name="Scherer S."/>
            <person name="Magee B.B."/>
            <person name="Whiteway M."/>
            <person name="Chibana H."/>
            <person name="Nantel A."/>
            <person name="Magee P.T."/>
        </authorList>
    </citation>
    <scope>GENOME REANNOTATION</scope>
    <source>
        <strain>SC5314 / ATCC MYA-2876</strain>
    </source>
</reference>
<reference key="4">
    <citation type="journal article" date="2013" name="Genome Biol.">
        <title>Assembly of a phased diploid Candida albicans genome facilitates allele-specific measurements and provides a simple model for repeat and indel structure.</title>
        <authorList>
            <person name="Muzzey D."/>
            <person name="Schwartz K."/>
            <person name="Weissman J.S."/>
            <person name="Sherlock G."/>
        </authorList>
    </citation>
    <scope>NUCLEOTIDE SEQUENCE [LARGE SCALE GENOMIC DNA]</scope>
    <scope>GENOME REANNOTATION</scope>
    <source>
        <strain>SC5314 / ATCC MYA-2876</strain>
    </source>
</reference>
<proteinExistence type="inferred from homology"/>
<protein>
    <recommendedName>
        <fullName>ATP-dependent RNA helicase eIF4A</fullName>
        <ecNumber>3.6.4.13</ecNumber>
    </recommendedName>
    <alternativeName>
        <fullName>Eukaryotic initiation factor 4A</fullName>
        <shortName>eIF-4A</shortName>
    </alternativeName>
    <alternativeName>
        <fullName>Translation initiation factor 1</fullName>
    </alternativeName>
</protein>
<evidence type="ECO:0000250" key="1"/>
<evidence type="ECO:0000255" key="2">
    <source>
        <dbReference type="PROSITE-ProRule" id="PRU00541"/>
    </source>
</evidence>
<evidence type="ECO:0000255" key="3">
    <source>
        <dbReference type="PROSITE-ProRule" id="PRU00542"/>
    </source>
</evidence>
<evidence type="ECO:0000305" key="4"/>
<name>IF4A_CANAL</name>
<keyword id="KW-0067">ATP-binding</keyword>
<keyword id="KW-0963">Cytoplasm</keyword>
<keyword id="KW-0347">Helicase</keyword>
<keyword id="KW-0378">Hydrolase</keyword>
<keyword id="KW-0396">Initiation factor</keyword>
<keyword id="KW-0547">Nucleotide-binding</keyword>
<keyword id="KW-0648">Protein biosynthesis</keyword>
<keyword id="KW-1185">Reference proteome</keyword>
<keyword id="KW-0694">RNA-binding</keyword>
<dbReference type="EC" id="3.6.4.13"/>
<dbReference type="EMBL" id="D84472">
    <property type="protein sequence ID" value="BAA20371.1"/>
    <property type="molecule type" value="Genomic_DNA"/>
</dbReference>
<dbReference type="EMBL" id="CP017623">
    <property type="protein sequence ID" value="AOW25828.1"/>
    <property type="molecule type" value="Genomic_DNA"/>
</dbReference>
<dbReference type="RefSeq" id="XP_718147.1">
    <property type="nucleotide sequence ID" value="XM_713054.1"/>
</dbReference>
<dbReference type="SMR" id="P87206"/>
<dbReference type="BioGRID" id="1223011">
    <property type="interactions" value="10"/>
</dbReference>
<dbReference type="FunCoup" id="P87206">
    <property type="interactions" value="1360"/>
</dbReference>
<dbReference type="STRING" id="237561.P87206"/>
<dbReference type="EnsemblFungi" id="C1_01350C_A-T">
    <property type="protein sequence ID" value="C1_01350C_A-T-p1"/>
    <property type="gene ID" value="C1_01350C_A"/>
</dbReference>
<dbReference type="GeneID" id="3640190"/>
<dbReference type="KEGG" id="cal:CAALFM_C101350CA"/>
<dbReference type="CGD" id="CAL0000186279">
    <property type="gene designation" value="TIF"/>
</dbReference>
<dbReference type="VEuPathDB" id="FungiDB:C1_01350C_A"/>
<dbReference type="eggNOG" id="KOG0327">
    <property type="taxonomic scope" value="Eukaryota"/>
</dbReference>
<dbReference type="HOGENOM" id="CLU_003041_1_0_1"/>
<dbReference type="InParanoid" id="P87206"/>
<dbReference type="OMA" id="FGCQALV"/>
<dbReference type="OrthoDB" id="10265785at2759"/>
<dbReference type="PRO" id="PR:P87206"/>
<dbReference type="Proteomes" id="UP000000559">
    <property type="component" value="Chromosome 1"/>
</dbReference>
<dbReference type="GO" id="GO:0010494">
    <property type="term" value="C:cytoplasmic stress granule"/>
    <property type="evidence" value="ECO:0000318"/>
    <property type="project" value="GO_Central"/>
</dbReference>
<dbReference type="GO" id="GO:0005524">
    <property type="term" value="F:ATP binding"/>
    <property type="evidence" value="ECO:0007669"/>
    <property type="project" value="UniProtKB-KW"/>
</dbReference>
<dbReference type="GO" id="GO:0016887">
    <property type="term" value="F:ATP hydrolysis activity"/>
    <property type="evidence" value="ECO:0007669"/>
    <property type="project" value="RHEA"/>
</dbReference>
<dbReference type="GO" id="GO:0003723">
    <property type="term" value="F:RNA binding"/>
    <property type="evidence" value="ECO:0007669"/>
    <property type="project" value="UniProtKB-KW"/>
</dbReference>
<dbReference type="GO" id="GO:0003724">
    <property type="term" value="F:RNA helicase activity"/>
    <property type="evidence" value="ECO:0007669"/>
    <property type="project" value="UniProtKB-EC"/>
</dbReference>
<dbReference type="GO" id="GO:0003743">
    <property type="term" value="F:translation initiation factor activity"/>
    <property type="evidence" value="ECO:0000250"/>
    <property type="project" value="CGD"/>
</dbReference>
<dbReference type="GO" id="GO:0002183">
    <property type="term" value="P:cytoplasmic translational initiation"/>
    <property type="evidence" value="ECO:0000318"/>
    <property type="project" value="GO_Central"/>
</dbReference>
<dbReference type="GO" id="GO:0006413">
    <property type="term" value="P:translational initiation"/>
    <property type="evidence" value="ECO:0000250"/>
    <property type="project" value="CGD"/>
</dbReference>
<dbReference type="CDD" id="cd18787">
    <property type="entry name" value="SF2_C_DEAD"/>
    <property type="match status" value="1"/>
</dbReference>
<dbReference type="FunFam" id="3.40.50.300:FF:000089">
    <property type="entry name" value="Eukaryotic initiation factor 4A-II"/>
    <property type="match status" value="1"/>
</dbReference>
<dbReference type="FunFam" id="3.40.50.300:FF:000031">
    <property type="entry name" value="Eukaryotic initiation factor 4A-III"/>
    <property type="match status" value="1"/>
</dbReference>
<dbReference type="Gene3D" id="3.40.50.300">
    <property type="entry name" value="P-loop containing nucleotide triphosphate hydrolases"/>
    <property type="match status" value="2"/>
</dbReference>
<dbReference type="InterPro" id="IPR011545">
    <property type="entry name" value="DEAD/DEAH_box_helicase_dom"/>
</dbReference>
<dbReference type="InterPro" id="IPR014001">
    <property type="entry name" value="Helicase_ATP-bd"/>
</dbReference>
<dbReference type="InterPro" id="IPR001650">
    <property type="entry name" value="Helicase_C-like"/>
</dbReference>
<dbReference type="InterPro" id="IPR027417">
    <property type="entry name" value="P-loop_NTPase"/>
</dbReference>
<dbReference type="InterPro" id="IPR000629">
    <property type="entry name" value="RNA-helicase_DEAD-box_CS"/>
</dbReference>
<dbReference type="InterPro" id="IPR014014">
    <property type="entry name" value="RNA_helicase_DEAD_Q_motif"/>
</dbReference>
<dbReference type="PANTHER" id="PTHR47958">
    <property type="entry name" value="ATP-DEPENDENT RNA HELICASE DBP3"/>
    <property type="match status" value="1"/>
</dbReference>
<dbReference type="Pfam" id="PF00270">
    <property type="entry name" value="DEAD"/>
    <property type="match status" value="1"/>
</dbReference>
<dbReference type="Pfam" id="PF00271">
    <property type="entry name" value="Helicase_C"/>
    <property type="match status" value="1"/>
</dbReference>
<dbReference type="SMART" id="SM00487">
    <property type="entry name" value="DEXDc"/>
    <property type="match status" value="1"/>
</dbReference>
<dbReference type="SMART" id="SM00490">
    <property type="entry name" value="HELICc"/>
    <property type="match status" value="1"/>
</dbReference>
<dbReference type="SUPFAM" id="SSF52540">
    <property type="entry name" value="P-loop containing nucleoside triphosphate hydrolases"/>
    <property type="match status" value="1"/>
</dbReference>
<dbReference type="PROSITE" id="PS00039">
    <property type="entry name" value="DEAD_ATP_HELICASE"/>
    <property type="match status" value="1"/>
</dbReference>
<dbReference type="PROSITE" id="PS51192">
    <property type="entry name" value="HELICASE_ATP_BIND_1"/>
    <property type="match status" value="1"/>
</dbReference>
<dbReference type="PROSITE" id="PS51194">
    <property type="entry name" value="HELICASE_CTER"/>
    <property type="match status" value="1"/>
</dbReference>
<dbReference type="PROSITE" id="PS51195">
    <property type="entry name" value="Q_MOTIF"/>
    <property type="match status" value="1"/>
</dbReference>
<accession>P87206</accession>
<accession>A0A1D8PCG1</accession>
<accession>Q5A910</accession>
<feature type="chain" id="PRO_0000054965" description="ATP-dependent RNA helicase eIF4A">
    <location>
        <begin position="1"/>
        <end position="397"/>
    </location>
</feature>
<feature type="domain" description="Helicase ATP-binding" evidence="2">
    <location>
        <begin position="54"/>
        <end position="224"/>
    </location>
</feature>
<feature type="domain" description="Helicase C-terminal" evidence="3">
    <location>
        <begin position="235"/>
        <end position="396"/>
    </location>
</feature>
<feature type="short sequence motif" description="Q motif">
    <location>
        <begin position="23"/>
        <end position="51"/>
    </location>
</feature>
<feature type="short sequence motif" description="DEAD box">
    <location>
        <begin position="172"/>
        <end position="175"/>
    </location>
</feature>
<feature type="binding site" evidence="2">
    <location>
        <begin position="67"/>
        <end position="74"/>
    </location>
    <ligand>
        <name>ATP</name>
        <dbReference type="ChEBI" id="CHEBI:30616"/>
    </ligand>
</feature>
<gene>
    <name type="primary">TIF1</name>
    <name type="synonym">TIF</name>
    <name type="synonym">TIF41</name>
    <name type="ordered locus">CAALFM_C101350CA</name>
    <name type="ORF">CaO19.10834</name>
    <name type="ORF">CaO19.3324</name>
</gene>